<protein>
    <recommendedName>
        <fullName evidence="4">Diacylglycerol kinase</fullName>
        <shortName>DAG kinase</shortName>
        <shortName>DAGK</shortName>
        <ecNumber evidence="3">2.7.1.107</ecNumber>
    </recommendedName>
</protein>
<sequence length="303" mass="33337">MKRARIIYNPTSGREIFKKHLAQVLQKFEQAGYETSTHATTCAGDATHAAKEAALREFDLIIAAGGDGTINEVVNGLAPLDNRPTLGVIPVGTTNDFARALGIPREDILKAADTVINGVARPIDIGQVNGQYFINIAGGGRLTELTYDVPSKLKTMLGQLAYYLKGMEMLPSLRPTEVEIEYDGKLFQGEIMLFLVTLTNSVGGFEKLAPDSSLNDGMFDLMILKKANLAEFIRVATMALRGEHINDQHIIYTKANRVKVNVSEKMQLNLDGEYGGMLPGEFVNLYRHIHVVMPKEKAEQLDD</sequence>
<dbReference type="EC" id="2.7.1.107" evidence="3"/>
<dbReference type="EMBL" id="AL009126">
    <property type="protein sequence ID" value="CAB12492.1"/>
    <property type="molecule type" value="Genomic_DNA"/>
</dbReference>
<dbReference type="PIR" id="F69795">
    <property type="entry name" value="F69795"/>
</dbReference>
<dbReference type="RefSeq" id="NP_388554.1">
    <property type="nucleotide sequence ID" value="NC_000964.3"/>
</dbReference>
<dbReference type="RefSeq" id="WP_003233894.1">
    <property type="nucleotide sequence ID" value="NZ_OZ025638.1"/>
</dbReference>
<dbReference type="SMR" id="O31502"/>
<dbReference type="FunCoup" id="O31502">
    <property type="interactions" value="507"/>
</dbReference>
<dbReference type="IntAct" id="O31502">
    <property type="interactions" value="2"/>
</dbReference>
<dbReference type="STRING" id="224308.BSU06720"/>
<dbReference type="SwissLipids" id="SLP:000001808"/>
<dbReference type="PaxDb" id="224308-BSU06720"/>
<dbReference type="EnsemblBacteria" id="CAB12492">
    <property type="protein sequence ID" value="CAB12492"/>
    <property type="gene ID" value="BSU_06720"/>
</dbReference>
<dbReference type="GeneID" id="936061"/>
<dbReference type="KEGG" id="bsu:BSU06720"/>
<dbReference type="PATRIC" id="fig|224308.179.peg.730"/>
<dbReference type="eggNOG" id="COG1597">
    <property type="taxonomic scope" value="Bacteria"/>
</dbReference>
<dbReference type="InParanoid" id="O31502"/>
<dbReference type="OrthoDB" id="142078at2"/>
<dbReference type="PhylomeDB" id="O31502"/>
<dbReference type="BioCyc" id="BSUB:BSU06720-MONOMER"/>
<dbReference type="Proteomes" id="UP000001570">
    <property type="component" value="Chromosome"/>
</dbReference>
<dbReference type="GO" id="GO:0005524">
    <property type="term" value="F:ATP binding"/>
    <property type="evidence" value="ECO:0007669"/>
    <property type="project" value="UniProtKB-KW"/>
</dbReference>
<dbReference type="GO" id="GO:0004143">
    <property type="term" value="F:ATP-dependent diacylglycerol kinase activity"/>
    <property type="evidence" value="ECO:0000314"/>
    <property type="project" value="CACAO"/>
</dbReference>
<dbReference type="GO" id="GO:0046872">
    <property type="term" value="F:metal ion binding"/>
    <property type="evidence" value="ECO:0007669"/>
    <property type="project" value="UniProtKB-KW"/>
</dbReference>
<dbReference type="GO" id="GO:0008654">
    <property type="term" value="P:phospholipid biosynthetic process"/>
    <property type="evidence" value="ECO:0007669"/>
    <property type="project" value="UniProtKB-KW"/>
</dbReference>
<dbReference type="FunFam" id="3.40.50.10330:FF:000008">
    <property type="entry name" value="Probable lipid kinase YegS"/>
    <property type="match status" value="1"/>
</dbReference>
<dbReference type="Gene3D" id="2.60.200.40">
    <property type="match status" value="1"/>
</dbReference>
<dbReference type="Gene3D" id="3.40.50.10330">
    <property type="entry name" value="Probable inorganic polyphosphate/atp-NAD kinase, domain 1"/>
    <property type="match status" value="1"/>
</dbReference>
<dbReference type="InterPro" id="IPR017438">
    <property type="entry name" value="ATP-NAD_kinase_N"/>
</dbReference>
<dbReference type="InterPro" id="IPR005218">
    <property type="entry name" value="Diacylglycerol/lipid_kinase"/>
</dbReference>
<dbReference type="InterPro" id="IPR001206">
    <property type="entry name" value="Diacylglycerol_kinase_cat_dom"/>
</dbReference>
<dbReference type="InterPro" id="IPR050187">
    <property type="entry name" value="Lipid_Phosphate_FormReg"/>
</dbReference>
<dbReference type="InterPro" id="IPR016064">
    <property type="entry name" value="NAD/diacylglycerol_kinase_sf"/>
</dbReference>
<dbReference type="InterPro" id="IPR045540">
    <property type="entry name" value="YegS/DAGK_C"/>
</dbReference>
<dbReference type="NCBIfam" id="NF009603">
    <property type="entry name" value="PRK13055.1"/>
    <property type="match status" value="1"/>
</dbReference>
<dbReference type="NCBIfam" id="NF009874">
    <property type="entry name" value="PRK13337.1"/>
    <property type="match status" value="1"/>
</dbReference>
<dbReference type="NCBIfam" id="TIGR00147">
    <property type="entry name" value="YegS/Rv2252/BmrU family lipid kinase"/>
    <property type="match status" value="1"/>
</dbReference>
<dbReference type="PANTHER" id="PTHR12358:SF106">
    <property type="entry name" value="LIPID KINASE YEGS"/>
    <property type="match status" value="1"/>
</dbReference>
<dbReference type="PANTHER" id="PTHR12358">
    <property type="entry name" value="SPHINGOSINE KINASE"/>
    <property type="match status" value="1"/>
</dbReference>
<dbReference type="Pfam" id="PF00781">
    <property type="entry name" value="DAGK_cat"/>
    <property type="match status" value="1"/>
</dbReference>
<dbReference type="Pfam" id="PF19279">
    <property type="entry name" value="YegS_C"/>
    <property type="match status" value="1"/>
</dbReference>
<dbReference type="SMART" id="SM00046">
    <property type="entry name" value="DAGKc"/>
    <property type="match status" value="1"/>
</dbReference>
<dbReference type="SUPFAM" id="SSF111331">
    <property type="entry name" value="NAD kinase/diacylglycerol kinase-like"/>
    <property type="match status" value="1"/>
</dbReference>
<dbReference type="PROSITE" id="PS50146">
    <property type="entry name" value="DAGK"/>
    <property type="match status" value="1"/>
</dbReference>
<keyword id="KW-0067">ATP-binding</keyword>
<keyword id="KW-0418">Kinase</keyword>
<keyword id="KW-0444">Lipid biosynthesis</keyword>
<keyword id="KW-0443">Lipid metabolism</keyword>
<keyword id="KW-0460">Magnesium</keyword>
<keyword id="KW-0479">Metal-binding</keyword>
<keyword id="KW-0547">Nucleotide-binding</keyword>
<keyword id="KW-0594">Phospholipid biosynthesis</keyword>
<keyword id="KW-1208">Phospholipid metabolism</keyword>
<keyword id="KW-1185">Reference proteome</keyword>
<keyword id="KW-0808">Transferase</keyword>
<gene>
    <name type="primary">dagK</name>
    <name type="synonym">dgkB</name>
    <name type="synonym">yerQ</name>
    <name type="ordered locus">BSU06720</name>
</gene>
<name>DAGK_BACSU</name>
<reference key="1">
    <citation type="journal article" date="1997" name="Nature">
        <title>The complete genome sequence of the Gram-positive bacterium Bacillus subtilis.</title>
        <authorList>
            <person name="Kunst F."/>
            <person name="Ogasawara N."/>
            <person name="Moszer I."/>
            <person name="Albertini A.M."/>
            <person name="Alloni G."/>
            <person name="Azevedo V."/>
            <person name="Bertero M.G."/>
            <person name="Bessieres P."/>
            <person name="Bolotin A."/>
            <person name="Borchert S."/>
            <person name="Borriss R."/>
            <person name="Boursier L."/>
            <person name="Brans A."/>
            <person name="Braun M."/>
            <person name="Brignell S.C."/>
            <person name="Bron S."/>
            <person name="Brouillet S."/>
            <person name="Bruschi C.V."/>
            <person name="Caldwell B."/>
            <person name="Capuano V."/>
            <person name="Carter N.M."/>
            <person name="Choi S.-K."/>
            <person name="Codani J.-J."/>
            <person name="Connerton I.F."/>
            <person name="Cummings N.J."/>
            <person name="Daniel R.A."/>
            <person name="Denizot F."/>
            <person name="Devine K.M."/>
            <person name="Duesterhoeft A."/>
            <person name="Ehrlich S.D."/>
            <person name="Emmerson P.T."/>
            <person name="Entian K.-D."/>
            <person name="Errington J."/>
            <person name="Fabret C."/>
            <person name="Ferrari E."/>
            <person name="Foulger D."/>
            <person name="Fritz C."/>
            <person name="Fujita M."/>
            <person name="Fujita Y."/>
            <person name="Fuma S."/>
            <person name="Galizzi A."/>
            <person name="Galleron N."/>
            <person name="Ghim S.-Y."/>
            <person name="Glaser P."/>
            <person name="Goffeau A."/>
            <person name="Golightly E.J."/>
            <person name="Grandi G."/>
            <person name="Guiseppi G."/>
            <person name="Guy B.J."/>
            <person name="Haga K."/>
            <person name="Haiech J."/>
            <person name="Harwood C.R."/>
            <person name="Henaut A."/>
            <person name="Hilbert H."/>
            <person name="Holsappel S."/>
            <person name="Hosono S."/>
            <person name="Hullo M.-F."/>
            <person name="Itaya M."/>
            <person name="Jones L.-M."/>
            <person name="Joris B."/>
            <person name="Karamata D."/>
            <person name="Kasahara Y."/>
            <person name="Klaerr-Blanchard M."/>
            <person name="Klein C."/>
            <person name="Kobayashi Y."/>
            <person name="Koetter P."/>
            <person name="Koningstein G."/>
            <person name="Krogh S."/>
            <person name="Kumano M."/>
            <person name="Kurita K."/>
            <person name="Lapidus A."/>
            <person name="Lardinois S."/>
            <person name="Lauber J."/>
            <person name="Lazarevic V."/>
            <person name="Lee S.-M."/>
            <person name="Levine A."/>
            <person name="Liu H."/>
            <person name="Masuda S."/>
            <person name="Mauel C."/>
            <person name="Medigue C."/>
            <person name="Medina N."/>
            <person name="Mellado R.P."/>
            <person name="Mizuno M."/>
            <person name="Moestl D."/>
            <person name="Nakai S."/>
            <person name="Noback M."/>
            <person name="Noone D."/>
            <person name="O'Reilly M."/>
            <person name="Ogawa K."/>
            <person name="Ogiwara A."/>
            <person name="Oudega B."/>
            <person name="Park S.-H."/>
            <person name="Parro V."/>
            <person name="Pohl T.M."/>
            <person name="Portetelle D."/>
            <person name="Porwollik S."/>
            <person name="Prescott A.M."/>
            <person name="Presecan E."/>
            <person name="Pujic P."/>
            <person name="Purnelle B."/>
            <person name="Rapoport G."/>
            <person name="Rey M."/>
            <person name="Reynolds S."/>
            <person name="Rieger M."/>
            <person name="Rivolta C."/>
            <person name="Rocha E."/>
            <person name="Roche B."/>
            <person name="Rose M."/>
            <person name="Sadaie Y."/>
            <person name="Sato T."/>
            <person name="Scanlan E."/>
            <person name="Schleich S."/>
            <person name="Schroeter R."/>
            <person name="Scoffone F."/>
            <person name="Sekiguchi J."/>
            <person name="Sekowska A."/>
            <person name="Seror S.J."/>
            <person name="Serror P."/>
            <person name="Shin B.-S."/>
            <person name="Soldo B."/>
            <person name="Sorokin A."/>
            <person name="Tacconi E."/>
            <person name="Takagi T."/>
            <person name="Takahashi H."/>
            <person name="Takemaru K."/>
            <person name="Takeuchi M."/>
            <person name="Tamakoshi A."/>
            <person name="Tanaka T."/>
            <person name="Terpstra P."/>
            <person name="Tognoni A."/>
            <person name="Tosato V."/>
            <person name="Uchiyama S."/>
            <person name="Vandenbol M."/>
            <person name="Vannier F."/>
            <person name="Vassarotti A."/>
            <person name="Viari A."/>
            <person name="Wambutt R."/>
            <person name="Wedler E."/>
            <person name="Wedler H."/>
            <person name="Weitzenegger T."/>
            <person name="Winters P."/>
            <person name="Wipat A."/>
            <person name="Yamamoto H."/>
            <person name="Yamane K."/>
            <person name="Yasumoto K."/>
            <person name="Yata K."/>
            <person name="Yoshida K."/>
            <person name="Yoshikawa H.-F."/>
            <person name="Zumstein E."/>
            <person name="Yoshikawa H."/>
            <person name="Danchin A."/>
        </authorList>
    </citation>
    <scope>NUCLEOTIDE SEQUENCE [LARGE SCALE GENOMIC DNA]</scope>
    <source>
        <strain>168</strain>
    </source>
</reference>
<reference key="2">
    <citation type="journal article" date="2007" name="J. Biol. Chem.">
        <title>Identification of a soluble diacylglycerol kinase required for lipoteichoic acid production in Bacillus subtilis.</title>
        <authorList>
            <person name="Jerga A."/>
            <person name="Lu Y.-J."/>
            <person name="Schujman G.E."/>
            <person name="de Mendoza D."/>
            <person name="Rock C.O."/>
        </authorList>
    </citation>
    <scope>FUNCTION AS A DIACYLGLYCEROL KINASE</scope>
    <scope>CATALYTIC ACTIVITY</scope>
    <scope>SUBSTRATE SPECIFICITY</scope>
    <scope>DISRUPTION PHENOTYPE</scope>
</reference>
<proteinExistence type="evidence at protein level"/>
<evidence type="ECO:0000250" key="1">
    <source>
        <dbReference type="UniProtKB" id="Q6GFF9"/>
    </source>
</evidence>
<evidence type="ECO:0000255" key="2">
    <source>
        <dbReference type="PROSITE-ProRule" id="PRU00783"/>
    </source>
</evidence>
<evidence type="ECO:0000269" key="3">
    <source>
    </source>
</evidence>
<evidence type="ECO:0000303" key="4">
    <source>
    </source>
</evidence>
<evidence type="ECO:0000305" key="5"/>
<accession>O31502</accession>
<comment type="function">
    <text evidence="3">Catalyzes the phosphorylation of diacylglycerol (DAG) into phosphatidic acid. Is a key enzyme involved in the production of lipoteichoic acid by reintroducing DAG formed from the breakdown of membrane phospholipids into the phosphatidylglycerol biosynthetic pathway. Is more active toward long-chain DAG compared with short-chain DAG. Is not able to phosphorylate substrates other than DAG, such as monoacylglycerol, ceramide, undecaprenol, phosphatidylinositol, or sphingosine.</text>
</comment>
<comment type="catalytic activity">
    <reaction evidence="3">
        <text>a 1,2-diacyl-sn-glycerol + ATP = a 1,2-diacyl-sn-glycero-3-phosphate + ADP + H(+)</text>
        <dbReference type="Rhea" id="RHEA:10272"/>
        <dbReference type="ChEBI" id="CHEBI:15378"/>
        <dbReference type="ChEBI" id="CHEBI:17815"/>
        <dbReference type="ChEBI" id="CHEBI:30616"/>
        <dbReference type="ChEBI" id="CHEBI:58608"/>
        <dbReference type="ChEBI" id="CHEBI:456216"/>
        <dbReference type="EC" id="2.7.1.107"/>
    </reaction>
    <physiologicalReaction direction="left-to-right" evidence="3">
        <dbReference type="Rhea" id="RHEA:10273"/>
    </physiologicalReaction>
</comment>
<comment type="catalytic activity">
    <reaction evidence="3">
        <text>1,2-di-(9Z-octadecenoyl)-sn-glycerol + ATP = 1,2-di-(9Z-octadecenoyl)-sn-glycero-3-phosphate + ADP + H(+)</text>
        <dbReference type="Rhea" id="RHEA:40327"/>
        <dbReference type="ChEBI" id="CHEBI:15378"/>
        <dbReference type="ChEBI" id="CHEBI:30616"/>
        <dbReference type="ChEBI" id="CHEBI:52333"/>
        <dbReference type="ChEBI" id="CHEBI:74546"/>
        <dbReference type="ChEBI" id="CHEBI:456216"/>
    </reaction>
    <physiologicalReaction direction="left-to-right" evidence="3">
        <dbReference type="Rhea" id="RHEA:40328"/>
    </physiologicalReaction>
</comment>
<comment type="cofactor">
    <cofactor evidence="1">
        <name>Mg(2+)</name>
        <dbReference type="ChEBI" id="CHEBI:18420"/>
    </cofactor>
    <text evidence="1">Binds 1 Mg(2+) ion per subunit. This ion appears to have a structural role and is required for catalytic activity.</text>
</comment>
<comment type="disruption phenotype">
    <text evidence="3">Cells lacking this gene are not viable. They exhibit accumulation of diacylglycerol, disappearance of phosphatidylglycerol, and the cessation of lipoteichoic acid formation.</text>
</comment>
<comment type="similarity">
    <text evidence="5">Belongs to the diacylglycerol/lipid kinase family.</text>
</comment>
<organism>
    <name type="scientific">Bacillus subtilis (strain 168)</name>
    <dbReference type="NCBI Taxonomy" id="224308"/>
    <lineage>
        <taxon>Bacteria</taxon>
        <taxon>Bacillati</taxon>
        <taxon>Bacillota</taxon>
        <taxon>Bacilli</taxon>
        <taxon>Bacillales</taxon>
        <taxon>Bacillaceae</taxon>
        <taxon>Bacillus</taxon>
    </lineage>
</organism>
<feature type="chain" id="PRO_0000386482" description="Diacylglycerol kinase">
    <location>
        <begin position="1"/>
        <end position="303"/>
    </location>
</feature>
<feature type="domain" description="DAGKc" evidence="2">
    <location>
        <begin position="1"/>
        <end position="132"/>
    </location>
</feature>
<feature type="active site" description="Proton acceptor" evidence="1">
    <location>
        <position position="273"/>
    </location>
</feature>
<feature type="binding site" evidence="2">
    <location>
        <begin position="9"/>
        <end position="13"/>
    </location>
    <ligand>
        <name>ATP</name>
        <dbReference type="ChEBI" id="CHEBI:30616"/>
    </ligand>
</feature>
<feature type="binding site" evidence="2">
    <location>
        <position position="40"/>
    </location>
    <ligand>
        <name>ATP</name>
        <dbReference type="ChEBI" id="CHEBI:30616"/>
    </ligand>
</feature>
<feature type="binding site" evidence="2">
    <location>
        <begin position="66"/>
        <end position="72"/>
    </location>
    <ligand>
        <name>ATP</name>
        <dbReference type="ChEBI" id="CHEBI:30616"/>
    </ligand>
</feature>
<feature type="binding site" evidence="2">
    <location>
        <position position="93"/>
    </location>
    <ligand>
        <name>ATP</name>
        <dbReference type="ChEBI" id="CHEBI:30616"/>
    </ligand>
</feature>
<feature type="binding site" evidence="1">
    <location>
        <position position="213"/>
    </location>
    <ligand>
        <name>Mg(2+)</name>
        <dbReference type="ChEBI" id="CHEBI:18420"/>
    </ligand>
</feature>
<feature type="binding site" evidence="1">
    <location>
        <position position="216"/>
    </location>
    <ligand>
        <name>Mg(2+)</name>
        <dbReference type="ChEBI" id="CHEBI:18420"/>
    </ligand>
</feature>
<feature type="binding site" evidence="1">
    <location>
        <position position="218"/>
    </location>
    <ligand>
        <name>Mg(2+)</name>
        <dbReference type="ChEBI" id="CHEBI:18420"/>
    </ligand>
</feature>